<protein>
    <recommendedName>
        <fullName evidence="1">Replication factor C small subunit</fullName>
        <shortName evidence="1">RFC small subunit</shortName>
    </recommendedName>
    <alternativeName>
        <fullName evidence="1">Clamp loader small subunit</fullName>
    </alternativeName>
</protein>
<reference key="1">
    <citation type="journal article" date="2005" name="Genome Res.">
        <title>Living with two extremes: conclusions from the genome sequence of Natronomonas pharaonis.</title>
        <authorList>
            <person name="Falb M."/>
            <person name="Pfeiffer F."/>
            <person name="Palm P."/>
            <person name="Rodewald K."/>
            <person name="Hickmann V."/>
            <person name="Tittor J."/>
            <person name="Oesterhelt D."/>
        </authorList>
    </citation>
    <scope>NUCLEOTIDE SEQUENCE [LARGE SCALE GENOMIC DNA]</scope>
    <source>
        <strain>ATCC 35678 / DSM 2160 / CIP 103997 / JCM 8858 / NBRC 14720 / NCIMB 2260 / Gabara</strain>
    </source>
</reference>
<feature type="chain" id="PRO_0000135979" description="Replication factor C small subunit">
    <location>
        <begin position="1"/>
        <end position="325"/>
    </location>
</feature>
<feature type="binding site" evidence="1">
    <location>
        <begin position="52"/>
        <end position="59"/>
    </location>
    <ligand>
        <name>ATP</name>
        <dbReference type="ChEBI" id="CHEBI:30616"/>
    </ligand>
</feature>
<gene>
    <name evidence="1" type="primary">rfcS</name>
    <name type="synonym">rfcA</name>
    <name type="ordered locus">NP_0900A</name>
</gene>
<evidence type="ECO:0000255" key="1">
    <source>
        <dbReference type="HAMAP-Rule" id="MF_01509"/>
    </source>
</evidence>
<proteinExistence type="inferred from homology"/>
<name>RFCS_NATPD</name>
<dbReference type="EMBL" id="CR936257">
    <property type="protein sequence ID" value="CAI48541.1"/>
    <property type="molecule type" value="Genomic_DNA"/>
</dbReference>
<dbReference type="RefSeq" id="WP_011322177.1">
    <property type="nucleotide sequence ID" value="NC_007426.1"/>
</dbReference>
<dbReference type="SMR" id="Q3ITJ2"/>
<dbReference type="STRING" id="348780.NP_0900A"/>
<dbReference type="EnsemblBacteria" id="CAI48541">
    <property type="protein sequence ID" value="CAI48541"/>
    <property type="gene ID" value="NP_0900A"/>
</dbReference>
<dbReference type="GeneID" id="3703100"/>
<dbReference type="KEGG" id="nph:NP_0900A"/>
<dbReference type="eggNOG" id="arCOG00469">
    <property type="taxonomic scope" value="Archaea"/>
</dbReference>
<dbReference type="HOGENOM" id="CLU_042324_2_1_2"/>
<dbReference type="OrthoDB" id="7928at2157"/>
<dbReference type="Proteomes" id="UP000002698">
    <property type="component" value="Chromosome"/>
</dbReference>
<dbReference type="GO" id="GO:0005663">
    <property type="term" value="C:DNA replication factor C complex"/>
    <property type="evidence" value="ECO:0007669"/>
    <property type="project" value="InterPro"/>
</dbReference>
<dbReference type="GO" id="GO:0005524">
    <property type="term" value="F:ATP binding"/>
    <property type="evidence" value="ECO:0007669"/>
    <property type="project" value="UniProtKB-UniRule"/>
</dbReference>
<dbReference type="GO" id="GO:0016887">
    <property type="term" value="F:ATP hydrolysis activity"/>
    <property type="evidence" value="ECO:0007669"/>
    <property type="project" value="InterPro"/>
</dbReference>
<dbReference type="GO" id="GO:0003677">
    <property type="term" value="F:DNA binding"/>
    <property type="evidence" value="ECO:0007669"/>
    <property type="project" value="InterPro"/>
</dbReference>
<dbReference type="GO" id="GO:0003689">
    <property type="term" value="F:DNA clamp loader activity"/>
    <property type="evidence" value="ECO:0007669"/>
    <property type="project" value="UniProtKB-UniRule"/>
</dbReference>
<dbReference type="GO" id="GO:0006281">
    <property type="term" value="P:DNA repair"/>
    <property type="evidence" value="ECO:0007669"/>
    <property type="project" value="TreeGrafter"/>
</dbReference>
<dbReference type="GO" id="GO:0006261">
    <property type="term" value="P:DNA-templated DNA replication"/>
    <property type="evidence" value="ECO:0007669"/>
    <property type="project" value="TreeGrafter"/>
</dbReference>
<dbReference type="CDD" id="cd00009">
    <property type="entry name" value="AAA"/>
    <property type="match status" value="1"/>
</dbReference>
<dbReference type="CDD" id="cd18140">
    <property type="entry name" value="HLD_clamp_RFC"/>
    <property type="match status" value="1"/>
</dbReference>
<dbReference type="FunFam" id="1.20.272.10:FF:000029">
    <property type="entry name" value="Replication factor C small subunit"/>
    <property type="match status" value="1"/>
</dbReference>
<dbReference type="FunFam" id="3.40.50.300:FF:000952">
    <property type="entry name" value="Replication factor C subunit 2"/>
    <property type="match status" value="1"/>
</dbReference>
<dbReference type="Gene3D" id="1.10.8.60">
    <property type="match status" value="1"/>
</dbReference>
<dbReference type="Gene3D" id="1.20.272.10">
    <property type="match status" value="1"/>
</dbReference>
<dbReference type="Gene3D" id="3.40.50.300">
    <property type="entry name" value="P-loop containing nucleotide triphosphate hydrolases"/>
    <property type="match status" value="1"/>
</dbReference>
<dbReference type="HAMAP" id="MF_01509">
    <property type="entry name" value="RfcS"/>
    <property type="match status" value="1"/>
</dbReference>
<dbReference type="InterPro" id="IPR003593">
    <property type="entry name" value="AAA+_ATPase"/>
</dbReference>
<dbReference type="InterPro" id="IPR003959">
    <property type="entry name" value="ATPase_AAA_core"/>
</dbReference>
<dbReference type="InterPro" id="IPR008921">
    <property type="entry name" value="DNA_pol3_clamp-load_cplx_C"/>
</dbReference>
<dbReference type="InterPro" id="IPR050238">
    <property type="entry name" value="DNA_Rep/Repair_Clamp_Loader"/>
</dbReference>
<dbReference type="InterPro" id="IPR027417">
    <property type="entry name" value="P-loop_NTPase"/>
</dbReference>
<dbReference type="InterPro" id="IPR023748">
    <property type="entry name" value="Rep_factor-C_ssu_arc"/>
</dbReference>
<dbReference type="InterPro" id="IPR013748">
    <property type="entry name" value="Rep_factorC_C"/>
</dbReference>
<dbReference type="InterPro" id="IPR047854">
    <property type="entry name" value="RFC_lid"/>
</dbReference>
<dbReference type="NCBIfam" id="NF001679">
    <property type="entry name" value="PRK00440.1"/>
    <property type="match status" value="1"/>
</dbReference>
<dbReference type="PANTHER" id="PTHR11669">
    <property type="entry name" value="REPLICATION FACTOR C / DNA POLYMERASE III GAMMA-TAU SUBUNIT"/>
    <property type="match status" value="1"/>
</dbReference>
<dbReference type="PANTHER" id="PTHR11669:SF20">
    <property type="entry name" value="REPLICATION FACTOR C SUBUNIT 4"/>
    <property type="match status" value="1"/>
</dbReference>
<dbReference type="Pfam" id="PF00004">
    <property type="entry name" value="AAA"/>
    <property type="match status" value="1"/>
</dbReference>
<dbReference type="Pfam" id="PF08542">
    <property type="entry name" value="Rep_fac_C"/>
    <property type="match status" value="1"/>
</dbReference>
<dbReference type="SMART" id="SM00382">
    <property type="entry name" value="AAA"/>
    <property type="match status" value="1"/>
</dbReference>
<dbReference type="SUPFAM" id="SSF52540">
    <property type="entry name" value="P-loop containing nucleoside triphosphate hydrolases"/>
    <property type="match status" value="1"/>
</dbReference>
<dbReference type="SUPFAM" id="SSF48019">
    <property type="entry name" value="post-AAA+ oligomerization domain-like"/>
    <property type="match status" value="1"/>
</dbReference>
<keyword id="KW-0067">ATP-binding</keyword>
<keyword id="KW-0235">DNA replication</keyword>
<keyword id="KW-0547">Nucleotide-binding</keyword>
<keyword id="KW-1185">Reference proteome</keyword>
<accession>Q3ITJ2</accession>
<comment type="function">
    <text evidence="1">Part of the RFC clamp loader complex which loads the PCNA sliding clamp onto DNA.</text>
</comment>
<comment type="subunit">
    <text evidence="1">Heteromultimer composed of small subunits (RfcS) and large subunits (RfcL).</text>
</comment>
<comment type="similarity">
    <text evidence="1">Belongs to the activator 1 small subunits family. RfcS subfamily.</text>
</comment>
<sequence>MSEGDADGGGREIWIEKYRPQTLDDIVGHESITERLKQYIAQNDLPHLLFAGPAGVGKTTAATAIAKEVYGDDWRENFLELNASDQRGIDVVRDRIKSFARASFGGYDHRIIFLDEADALTSDAQSALRRTMEQFSDNTRFILSCNYSSQIIDPIQSRCAVFRFSPLGDAAVDEQIRIIADTEGIELTDDGVDALVYAADGDMRKAINGLQAAAVMGGTVDEEAVYTITSTARPEEIREMVTEAMDGDFTAARSQLETLLTDVGIAGGDIIDQLHRSVWEFDLEEREAVQLMERIGEADYRITAGASEQLQLEALLAALARGNET</sequence>
<organism>
    <name type="scientific">Natronomonas pharaonis (strain ATCC 35678 / DSM 2160 / CIP 103997 / JCM 8858 / NBRC 14720 / NCIMB 2260 / Gabara)</name>
    <name type="common">Halobacterium pharaonis</name>
    <dbReference type="NCBI Taxonomy" id="348780"/>
    <lineage>
        <taxon>Archaea</taxon>
        <taxon>Methanobacteriati</taxon>
        <taxon>Methanobacteriota</taxon>
        <taxon>Stenosarchaea group</taxon>
        <taxon>Halobacteria</taxon>
        <taxon>Halobacteriales</taxon>
        <taxon>Haloarculaceae</taxon>
        <taxon>Natronomonas</taxon>
    </lineage>
</organism>